<dbReference type="EC" id="3.1.26.5" evidence="1"/>
<dbReference type="EMBL" id="CP000745">
    <property type="protein sequence ID" value="ABR65784.1"/>
    <property type="molecule type" value="Genomic_DNA"/>
</dbReference>
<dbReference type="SMR" id="A6VH58"/>
<dbReference type="STRING" id="426368.MmarC7_0717"/>
<dbReference type="KEGG" id="mmz:MmarC7_0717"/>
<dbReference type="eggNOG" id="arCOG00720">
    <property type="taxonomic scope" value="Archaea"/>
</dbReference>
<dbReference type="HOGENOM" id="CLU_109672_0_0_2"/>
<dbReference type="OrthoDB" id="95197at2157"/>
<dbReference type="GO" id="GO:0004526">
    <property type="term" value="F:ribonuclease P activity"/>
    <property type="evidence" value="ECO:0007669"/>
    <property type="project" value="UniProtKB-UniRule"/>
</dbReference>
<dbReference type="GO" id="GO:0001682">
    <property type="term" value="P:tRNA 5'-leader removal"/>
    <property type="evidence" value="ECO:0007669"/>
    <property type="project" value="UniProtKB-UniRule"/>
</dbReference>
<dbReference type="CDD" id="cd18691">
    <property type="entry name" value="PIN_VapC-like"/>
    <property type="match status" value="1"/>
</dbReference>
<dbReference type="HAMAP" id="MF_01078">
    <property type="entry name" value="RNA_free_RNase_P"/>
    <property type="match status" value="1"/>
</dbReference>
<dbReference type="InterPro" id="IPR014856">
    <property type="entry name" value="RNA_free_RNase_P"/>
</dbReference>
<dbReference type="NCBIfam" id="NF003340">
    <property type="entry name" value="PRK04358.1-1"/>
    <property type="match status" value="1"/>
</dbReference>
<dbReference type="NCBIfam" id="NF003343">
    <property type="entry name" value="PRK04358.1-4"/>
    <property type="match status" value="1"/>
</dbReference>
<dbReference type="NCBIfam" id="TIGR03875">
    <property type="entry name" value="RNA_lig_partner"/>
    <property type="match status" value="1"/>
</dbReference>
<dbReference type="PANTHER" id="PTHR41173:SF1">
    <property type="entry name" value="RNA-FREE RIBONUCLEASE P"/>
    <property type="match status" value="1"/>
</dbReference>
<dbReference type="PANTHER" id="PTHR41173">
    <property type="entry name" value="UPF0278 PROTEIN TK1425"/>
    <property type="match status" value="1"/>
</dbReference>
<dbReference type="Pfam" id="PF08745">
    <property type="entry name" value="PIN_5"/>
    <property type="match status" value="1"/>
</dbReference>
<comment type="function">
    <text evidence="1">RNA-free RNase P that catalyzes the removal of the 5'-leader sequence from pre-tRNA to produce the mature 5'-terminus.</text>
</comment>
<comment type="catalytic activity">
    <reaction evidence="1">
        <text>Endonucleolytic cleavage of RNA, removing 5'-extranucleotides from tRNA precursor.</text>
        <dbReference type="EC" id="3.1.26.5"/>
    </reaction>
</comment>
<comment type="similarity">
    <text evidence="1">Belongs to the HARP family.</text>
</comment>
<organism>
    <name type="scientific">Methanococcus maripaludis (strain C7 / ATCC BAA-1331)</name>
    <dbReference type="NCBI Taxonomy" id="426368"/>
    <lineage>
        <taxon>Archaea</taxon>
        <taxon>Methanobacteriati</taxon>
        <taxon>Methanobacteriota</taxon>
        <taxon>Methanomada group</taxon>
        <taxon>Methanococci</taxon>
        <taxon>Methanococcales</taxon>
        <taxon>Methanococcaceae</taxon>
        <taxon>Methanococcus</taxon>
    </lineage>
</organism>
<gene>
    <name type="ordered locus">MmarC7_0717</name>
</gene>
<feature type="chain" id="PRO_1000064801" description="RNA-free ribonuclease P">
    <location>
        <begin position="1"/>
        <end position="223"/>
    </location>
</feature>
<reference key="1">
    <citation type="submission" date="2007-06" db="EMBL/GenBank/DDBJ databases">
        <title>Complete sequence of Methanococcus maripaludis C7.</title>
        <authorList>
            <consortium name="US DOE Joint Genome Institute"/>
            <person name="Copeland A."/>
            <person name="Lucas S."/>
            <person name="Lapidus A."/>
            <person name="Barry K."/>
            <person name="Glavina del Rio T."/>
            <person name="Dalin E."/>
            <person name="Tice H."/>
            <person name="Pitluck S."/>
            <person name="Clum A."/>
            <person name="Schmutz J."/>
            <person name="Larimer F."/>
            <person name="Land M."/>
            <person name="Hauser L."/>
            <person name="Kyrpides N."/>
            <person name="Anderson I."/>
            <person name="Sieprawska-Lupa M."/>
            <person name="Whitman W.B."/>
            <person name="Richardson P."/>
        </authorList>
    </citation>
    <scope>NUCLEOTIDE SEQUENCE [LARGE SCALE GENOMIC DNA]</scope>
    <source>
        <strain>C7 / ATCC BAA-1331</strain>
    </source>
</reference>
<accession>A6VH58</accession>
<evidence type="ECO:0000255" key="1">
    <source>
        <dbReference type="HAMAP-Rule" id="MF_01078"/>
    </source>
</evidence>
<keyword id="KW-0255">Endonuclease</keyword>
<keyword id="KW-0378">Hydrolase</keyword>
<keyword id="KW-0540">Nuclease</keyword>
<keyword id="KW-0819">tRNA processing</keyword>
<protein>
    <recommendedName>
        <fullName evidence="1">RNA-free ribonuclease P</fullName>
        <shortName evidence="1">RNA-free RNase P</shortName>
        <ecNumber evidence="1">3.1.26.5</ecNumber>
    </recommendedName>
    <alternativeName>
        <fullName evidence="1">Protein-only RNase P</fullName>
    </alternativeName>
</protein>
<sequence length="223" mass="25831">MQKQRFCLDTTAITDSDVRRSLGVSNISESAEKIMDIIAQARVQLDISCHIPYNTVYKELVGFLIREECAPETLIKVDTWLVKKTPNRYEIKIPAEIFYEYIKDLRERINKGMRISENAMYETALEAYILSKPDEKDREDVLNEVLSKTVNSFRDKYRNTLRGGTLDSAPDLDVLLLAKELDAAVVANDEGIEKWAQRLGLRFVNARDFPFILQEYLDLWDKK</sequence>
<name>RFRNP_METM7</name>
<proteinExistence type="inferred from homology"/>